<sequence length="377" mass="42519">MENLSSACTHFSFDLFRKINENNATGNVFFSPISISTALAMVLLGARGNTAQQISRILHFDAVKDLHSNFQTLNAEINKKNVSSYALNLANRLFGEKSFKFLPDFLSSVKKQYNADLGTVDFISAAEDARKEINTWVSEQTKGKIPEVLSAGAVNSFTKLVLVNAIYFKGDWAKKFKAEHTKDMPFQLNKKEQKTVKMMYQMEKLPFNYIPEINCRVLELPYVDYELSMVIVLPDNINDDTTGLQQLEKELSLEKINEWTENMMPIDVHVHLPKFKLEDSYKLKSQLAGMGMADLFEAGSADLSGMSGSNDLYLSEVIHKSFVEVNEEGTEAAAASAGIAMMCLMREEEFNANHPFLFFIRHNATKSILFFGRYSSP</sequence>
<dbReference type="EMBL" id="BC088021">
    <property type="protein sequence ID" value="AAH88021.1"/>
    <property type="molecule type" value="mRNA"/>
</dbReference>
<dbReference type="RefSeq" id="NP_001011419.1">
    <property type="nucleotide sequence ID" value="NM_001011419.1"/>
</dbReference>
<dbReference type="RefSeq" id="XP_012820078.1">
    <property type="nucleotide sequence ID" value="XM_012964624.2"/>
</dbReference>
<dbReference type="SMR" id="Q5I0S8"/>
<dbReference type="FunCoup" id="Q5I0S8">
    <property type="interactions" value="388"/>
</dbReference>
<dbReference type="MEROPS" id="I04.006"/>
<dbReference type="PaxDb" id="8364-ENSXETP00000001376"/>
<dbReference type="GeneID" id="496899"/>
<dbReference type="KEGG" id="xtr:496899"/>
<dbReference type="AGR" id="Xenbase:XB-GENE-1217264"/>
<dbReference type="CTD" id="1992"/>
<dbReference type="Xenbase" id="XB-GENE-1217264">
    <property type="gene designation" value="serpinb1"/>
</dbReference>
<dbReference type="eggNOG" id="KOG2392">
    <property type="taxonomic scope" value="Eukaryota"/>
</dbReference>
<dbReference type="HOGENOM" id="CLU_023330_0_2_1"/>
<dbReference type="InParanoid" id="Q5I0S8"/>
<dbReference type="OrthoDB" id="671595at2759"/>
<dbReference type="TreeFam" id="TF352619"/>
<dbReference type="Reactome" id="R-XTR-6798695">
    <property type="pathway name" value="Neutrophil degranulation"/>
</dbReference>
<dbReference type="Proteomes" id="UP000008143">
    <property type="component" value="Chromosome 6"/>
</dbReference>
<dbReference type="Bgee" id="ENSXETG00000000624">
    <property type="expression patterns" value="Expressed in mesonephros and 15 other cell types or tissues"/>
</dbReference>
<dbReference type="ExpressionAtlas" id="Q5I0S8">
    <property type="expression patterns" value="baseline and differential"/>
</dbReference>
<dbReference type="GO" id="GO:0005737">
    <property type="term" value="C:cytoplasm"/>
    <property type="evidence" value="ECO:0007669"/>
    <property type="project" value="UniProtKB-SubCell"/>
</dbReference>
<dbReference type="GO" id="GO:0005615">
    <property type="term" value="C:extracellular space"/>
    <property type="evidence" value="ECO:0007669"/>
    <property type="project" value="InterPro"/>
</dbReference>
<dbReference type="GO" id="GO:0004867">
    <property type="term" value="F:serine-type endopeptidase inhibitor activity"/>
    <property type="evidence" value="ECO:0007669"/>
    <property type="project" value="UniProtKB-KW"/>
</dbReference>
<dbReference type="CDD" id="cd19560">
    <property type="entry name" value="serpinB1_LEI"/>
    <property type="match status" value="1"/>
</dbReference>
<dbReference type="FunFam" id="3.30.497.10:FF:000001">
    <property type="entry name" value="Serine protease inhibitor"/>
    <property type="match status" value="1"/>
</dbReference>
<dbReference type="FunFam" id="2.10.310.10:FF:000001">
    <property type="entry name" value="Serpin family A member 1"/>
    <property type="match status" value="1"/>
</dbReference>
<dbReference type="FunFam" id="2.30.39.10:FF:000014">
    <property type="entry name" value="Serpin family B member 9"/>
    <property type="match status" value="1"/>
</dbReference>
<dbReference type="Gene3D" id="2.30.39.10">
    <property type="entry name" value="Alpha-1-antitrypsin, domain 1"/>
    <property type="match status" value="1"/>
</dbReference>
<dbReference type="Gene3D" id="3.30.497.10">
    <property type="entry name" value="Antithrombin, subunit I, domain 2"/>
    <property type="match status" value="1"/>
</dbReference>
<dbReference type="Gene3D" id="2.10.310.10">
    <property type="entry name" value="Serpins superfamily"/>
    <property type="match status" value="1"/>
</dbReference>
<dbReference type="InterPro" id="IPR023795">
    <property type="entry name" value="Serpin_CS"/>
</dbReference>
<dbReference type="InterPro" id="IPR023796">
    <property type="entry name" value="Serpin_dom"/>
</dbReference>
<dbReference type="InterPro" id="IPR000215">
    <property type="entry name" value="Serpin_fam"/>
</dbReference>
<dbReference type="InterPro" id="IPR036186">
    <property type="entry name" value="Serpin_sf"/>
</dbReference>
<dbReference type="InterPro" id="IPR042178">
    <property type="entry name" value="Serpin_sf_1"/>
</dbReference>
<dbReference type="InterPro" id="IPR042185">
    <property type="entry name" value="Serpin_sf_2"/>
</dbReference>
<dbReference type="PANTHER" id="PTHR11461:SF180">
    <property type="entry name" value="LEUKOCYTE ELASTASE INHIBITOR"/>
    <property type="match status" value="1"/>
</dbReference>
<dbReference type="PANTHER" id="PTHR11461">
    <property type="entry name" value="SERINE PROTEASE INHIBITOR, SERPIN"/>
    <property type="match status" value="1"/>
</dbReference>
<dbReference type="Pfam" id="PF00079">
    <property type="entry name" value="Serpin"/>
    <property type="match status" value="1"/>
</dbReference>
<dbReference type="SMART" id="SM00093">
    <property type="entry name" value="SERPIN"/>
    <property type="match status" value="1"/>
</dbReference>
<dbReference type="SUPFAM" id="SSF56574">
    <property type="entry name" value="Serpins"/>
    <property type="match status" value="1"/>
</dbReference>
<dbReference type="PROSITE" id="PS00284">
    <property type="entry name" value="SERPIN"/>
    <property type="match status" value="1"/>
</dbReference>
<keyword id="KW-0007">Acetylation</keyword>
<keyword id="KW-0963">Cytoplasm</keyword>
<keyword id="KW-0646">Protease inhibitor</keyword>
<keyword id="KW-1185">Reference proteome</keyword>
<keyword id="KW-0722">Serine protease inhibitor</keyword>
<reference key="1">
    <citation type="submission" date="2004-12" db="EMBL/GenBank/DDBJ databases">
        <authorList>
            <consortium name="NIH - Xenopus Gene Collection (XGC) project"/>
        </authorList>
    </citation>
    <scope>NUCLEOTIDE SEQUENCE [LARGE SCALE MRNA]</scope>
</reference>
<comment type="function">
    <text evidence="1">Regulates the activity of the neutrophil proteases.</text>
</comment>
<comment type="subcellular location">
    <subcellularLocation>
        <location evidence="1">Cytoplasm</location>
    </subcellularLocation>
</comment>
<comment type="similarity">
    <text evidence="2">Belongs to the serpin family. Ov-serpin subfamily.</text>
</comment>
<name>ILEU_XENTR</name>
<evidence type="ECO:0000250" key="1"/>
<evidence type="ECO:0000305" key="2"/>
<feature type="chain" id="PRO_0000289125" description="Leukocyte elastase inhibitor">
    <location>
        <begin position="1"/>
        <end position="377"/>
    </location>
</feature>
<feature type="site" description="Reactive bond" evidence="1">
    <location>
        <begin position="344"/>
        <end position="345"/>
    </location>
</feature>
<feature type="modified residue" description="N-acetylmethionine" evidence="1">
    <location>
        <position position="1"/>
    </location>
</feature>
<proteinExistence type="evidence at transcript level"/>
<organism>
    <name type="scientific">Xenopus tropicalis</name>
    <name type="common">Western clawed frog</name>
    <name type="synonym">Silurana tropicalis</name>
    <dbReference type="NCBI Taxonomy" id="8364"/>
    <lineage>
        <taxon>Eukaryota</taxon>
        <taxon>Metazoa</taxon>
        <taxon>Chordata</taxon>
        <taxon>Craniata</taxon>
        <taxon>Vertebrata</taxon>
        <taxon>Euteleostomi</taxon>
        <taxon>Amphibia</taxon>
        <taxon>Batrachia</taxon>
        <taxon>Anura</taxon>
        <taxon>Pipoidea</taxon>
        <taxon>Pipidae</taxon>
        <taxon>Xenopodinae</taxon>
        <taxon>Xenopus</taxon>
        <taxon>Silurana</taxon>
    </lineage>
</organism>
<gene>
    <name type="primary">serpinb1</name>
</gene>
<accession>Q5I0S8</accession>
<protein>
    <recommendedName>
        <fullName>Leukocyte elastase inhibitor</fullName>
    </recommendedName>
    <alternativeName>
        <fullName>Serpin B1</fullName>
    </alternativeName>
</protein>